<proteinExistence type="predicted"/>
<organism>
    <name type="scientific">Human cytomegalovirus (strain AD169)</name>
    <name type="common">HHV-5</name>
    <name type="synonym">Human herpesvirus 5</name>
    <dbReference type="NCBI Taxonomy" id="10360"/>
    <lineage>
        <taxon>Viruses</taxon>
        <taxon>Duplodnaviria</taxon>
        <taxon>Heunggongvirae</taxon>
        <taxon>Peploviricota</taxon>
        <taxon>Herviviricetes</taxon>
        <taxon>Herpesvirales</taxon>
        <taxon>Orthoherpesviridae</taxon>
        <taxon>Betaherpesvirinae</taxon>
        <taxon>Cytomegalovirus</taxon>
        <taxon>Cytomegalovirus humanbeta5</taxon>
        <taxon>Human cytomegalovirus</taxon>
    </lineage>
</organism>
<name>UL60_HCMVA</name>
<gene>
    <name type="primary">UL60</name>
</gene>
<protein>
    <recommendedName>
        <fullName>Uncharacterized protein UL60</fullName>
    </recommendedName>
</protein>
<reference key="1">
    <citation type="journal article" date="1990" name="Curr. Top. Microbiol. Immunol.">
        <title>Analysis of the protein-coding content of the sequence of human cytomegalovirus strain AD169.</title>
        <authorList>
            <person name="Chee M.S."/>
            <person name="Bankier A.T."/>
            <person name="Beck S."/>
            <person name="Bohni R."/>
            <person name="Brown C.M."/>
            <person name="Cerny R."/>
            <person name="Horsnell T."/>
            <person name="Hutchison C.A. III"/>
            <person name="Kouzarides T."/>
            <person name="Martignetti J.A."/>
            <person name="Preddie E."/>
            <person name="Satchwell S.C."/>
            <person name="Tomlinson P."/>
            <person name="Weston K.M."/>
            <person name="Barrell B.G."/>
        </authorList>
    </citation>
    <scope>NUCLEOTIDE SEQUENCE [LARGE SCALE GENOMIC DNA]</scope>
</reference>
<dbReference type="EMBL" id="X17403">
    <property type="protein sequence ID" value="CAA35375.1"/>
    <property type="molecule type" value="Genomic_DNA"/>
</dbReference>
<dbReference type="PIR" id="S09823">
    <property type="entry name" value="S09823"/>
</dbReference>
<dbReference type="Proteomes" id="UP000008991">
    <property type="component" value="Segment"/>
</dbReference>
<accession>P16817</accession>
<sequence length="160" mass="18241">PPLVEKYWRMRTTHTVEFYRRMRRATLPRALARACAPGPLVHPSLYIGFPCGIPGACALESPSHNPRGNALTTKNSPRLRMRTETPSHWKSWLPKFGKNLPPPVPEEKGGGEGGGLRWFPFRQSVFVERFVRRIMLYRVCILGVEARLRPYGASPSIRYT</sequence>
<organismHost>
    <name type="scientific">Homo sapiens</name>
    <name type="common">Human</name>
    <dbReference type="NCBI Taxonomy" id="9606"/>
</organismHost>
<feature type="chain" id="PRO_0000115330" description="Uncharacterized protein UL60">
    <location>
        <begin position="1"/>
        <end position="160"/>
    </location>
</feature>